<protein>
    <recommendedName>
        <fullName>Calcium uptake protein 2, mitochondrial</fullName>
    </recommendedName>
    <alternativeName>
        <fullName>EF-hand domain-containing family member A1</fullName>
    </alternativeName>
</protein>
<comment type="function">
    <text evidence="2">Calcium sensor of the mitochondrial calcium uniporter (MCU) channel, which senses calcium level via its EF-hand domains. MICU1 and MICU2 form a disulfide-linked heterodimer that stimulates and inhibits MCU activity, depending on the concentration of calcium. At low calcium levels, MICU1 occludes the pore of the MCU channel, preventing mitochondrial calcium uptake. At higher calcium levels, calcium-binding to MICU1 and MICU2 induces a conformational change that weakens MCU-MICU1 interactions and moves the MICU1-MICU2 heterodimer away from the pore, allowing calcium permeation through the MCU channel.</text>
</comment>
<comment type="subunit">
    <text evidence="2">Heterodimer; disulfide-linked; heterodimerizes with MICU1. Component of the uniplex complex, composed of MCU, EMRE/SMDT1, MICU1 and MICU2 in a 4:4:1:1 stoichiometry.</text>
</comment>
<comment type="subcellular location">
    <subcellularLocation>
        <location evidence="2">Mitochondrion intermembrane space</location>
    </subcellularLocation>
    <subcellularLocation>
        <location evidence="2">Mitochondrion inner membrane</location>
    </subcellularLocation>
    <text evidence="2">Recruited to the mitochondrial inner membrane via its association with the uniplex complex.</text>
</comment>
<comment type="domain">
    <text evidence="2">EF-hand domains 1 and 4 have high affinity for calcium and act as sensors of mitochondrial matrix calcium levels. EF-hand domains 2 and 3 are degenerate.</text>
</comment>
<comment type="similarity">
    <text evidence="5">Belongs to the MICU1 family. MICU2 subfamily.</text>
</comment>
<dbReference type="EMBL" id="AF327513">
    <property type="protein sequence ID" value="AAG53983.1"/>
    <property type="molecule type" value="mRNA"/>
</dbReference>
<dbReference type="RefSeq" id="NP_599223.2">
    <property type="nucleotide sequence ID" value="NM_134396.2"/>
</dbReference>
<dbReference type="SMR" id="Q99P63"/>
<dbReference type="FunCoup" id="Q99P63">
    <property type="interactions" value="1164"/>
</dbReference>
<dbReference type="STRING" id="10116.ENSRNOP00000015233"/>
<dbReference type="GlyGen" id="Q99P63">
    <property type="glycosylation" value="1 site"/>
</dbReference>
<dbReference type="iPTMnet" id="Q99P63"/>
<dbReference type="PhosphoSitePlus" id="Q99P63"/>
<dbReference type="PaxDb" id="10116-ENSRNOP00000015233"/>
<dbReference type="GeneID" id="171433"/>
<dbReference type="KEGG" id="rno:171433"/>
<dbReference type="UCSC" id="RGD:619739">
    <property type="organism name" value="rat"/>
</dbReference>
<dbReference type="AGR" id="RGD:619739"/>
<dbReference type="CTD" id="221154"/>
<dbReference type="RGD" id="619739">
    <property type="gene designation" value="Micu2"/>
</dbReference>
<dbReference type="eggNOG" id="KOG2643">
    <property type="taxonomic scope" value="Eukaryota"/>
</dbReference>
<dbReference type="InParanoid" id="Q99P63"/>
<dbReference type="OrthoDB" id="42826at9989"/>
<dbReference type="PhylomeDB" id="Q99P63"/>
<dbReference type="Reactome" id="R-RNO-8949215">
    <property type="pathway name" value="Mitochondrial calcium ion transport"/>
</dbReference>
<dbReference type="Reactome" id="R-RNO-8949664">
    <property type="pathway name" value="Processing of SMDT1"/>
</dbReference>
<dbReference type="PRO" id="PR:Q99P63"/>
<dbReference type="Proteomes" id="UP000002494">
    <property type="component" value="Unplaced"/>
</dbReference>
<dbReference type="GO" id="GO:0034704">
    <property type="term" value="C:calcium channel complex"/>
    <property type="evidence" value="ECO:0000250"/>
    <property type="project" value="UniProtKB"/>
</dbReference>
<dbReference type="GO" id="GO:0005743">
    <property type="term" value="C:mitochondrial inner membrane"/>
    <property type="evidence" value="ECO:0000250"/>
    <property type="project" value="UniProtKB"/>
</dbReference>
<dbReference type="GO" id="GO:0005758">
    <property type="term" value="C:mitochondrial intermembrane space"/>
    <property type="evidence" value="ECO:0000250"/>
    <property type="project" value="UniProtKB"/>
</dbReference>
<dbReference type="GO" id="GO:0005739">
    <property type="term" value="C:mitochondrion"/>
    <property type="evidence" value="ECO:0000250"/>
    <property type="project" value="UniProtKB"/>
</dbReference>
<dbReference type="GO" id="GO:1990246">
    <property type="term" value="C:uniplex complex"/>
    <property type="evidence" value="ECO:0000250"/>
    <property type="project" value="UniProtKB"/>
</dbReference>
<dbReference type="GO" id="GO:0005246">
    <property type="term" value="F:calcium channel regulator activity"/>
    <property type="evidence" value="ECO:0000266"/>
    <property type="project" value="RGD"/>
</dbReference>
<dbReference type="GO" id="GO:0005509">
    <property type="term" value="F:calcium ion binding"/>
    <property type="evidence" value="ECO:0000266"/>
    <property type="project" value="RGD"/>
</dbReference>
<dbReference type="GO" id="GO:0061891">
    <property type="term" value="F:calcium ion sensor activity"/>
    <property type="evidence" value="ECO:0000250"/>
    <property type="project" value="UniProtKB"/>
</dbReference>
<dbReference type="GO" id="GO:0046982">
    <property type="term" value="F:protein heterodimerization activity"/>
    <property type="evidence" value="ECO:0000266"/>
    <property type="project" value="RGD"/>
</dbReference>
<dbReference type="GO" id="GO:0036444">
    <property type="term" value="P:calcium import into the mitochondrion"/>
    <property type="evidence" value="ECO:0000250"/>
    <property type="project" value="UniProtKB"/>
</dbReference>
<dbReference type="GO" id="GO:0071277">
    <property type="term" value="P:cellular response to calcium ion"/>
    <property type="evidence" value="ECO:0000266"/>
    <property type="project" value="RGD"/>
</dbReference>
<dbReference type="GO" id="GO:0051560">
    <property type="term" value="P:mitochondrial calcium ion homeostasis"/>
    <property type="evidence" value="ECO:0000266"/>
    <property type="project" value="RGD"/>
</dbReference>
<dbReference type="GO" id="GO:0006851">
    <property type="term" value="P:mitochondrial calcium ion transmembrane transport"/>
    <property type="evidence" value="ECO:0000250"/>
    <property type="project" value="UniProtKB"/>
</dbReference>
<dbReference type="GO" id="GO:0051562">
    <property type="term" value="P:negative regulation of mitochondrial calcium ion concentration"/>
    <property type="evidence" value="ECO:0000250"/>
    <property type="project" value="UniProtKB"/>
</dbReference>
<dbReference type="GO" id="GO:0051561">
    <property type="term" value="P:positive regulation of mitochondrial calcium ion concentration"/>
    <property type="evidence" value="ECO:0000250"/>
    <property type="project" value="UniProtKB"/>
</dbReference>
<dbReference type="FunFam" id="1.10.238.10:FF:000149">
    <property type="entry name" value="Mitochondrial calcium uptake family member 3"/>
    <property type="match status" value="1"/>
</dbReference>
<dbReference type="FunFam" id="1.10.238.10:FF:000211">
    <property type="entry name" value="Mitochondrial calcium uptake family member 3"/>
    <property type="match status" value="1"/>
</dbReference>
<dbReference type="Gene3D" id="1.10.238.10">
    <property type="entry name" value="EF-hand"/>
    <property type="match status" value="2"/>
</dbReference>
<dbReference type="InterPro" id="IPR011992">
    <property type="entry name" value="EF-hand-dom_pair"/>
</dbReference>
<dbReference type="InterPro" id="IPR002048">
    <property type="entry name" value="EF_hand_dom"/>
</dbReference>
<dbReference type="InterPro" id="IPR039800">
    <property type="entry name" value="MICU1/2/3"/>
</dbReference>
<dbReference type="PANTHER" id="PTHR12294:SF3">
    <property type="entry name" value="CALCIUM UPTAKE PROTEIN 2, MITOCHONDRIAL"/>
    <property type="match status" value="1"/>
</dbReference>
<dbReference type="PANTHER" id="PTHR12294">
    <property type="entry name" value="EF HAND DOMAIN FAMILY A1,A2-RELATED"/>
    <property type="match status" value="1"/>
</dbReference>
<dbReference type="SMART" id="SM00054">
    <property type="entry name" value="EFh"/>
    <property type="match status" value="2"/>
</dbReference>
<dbReference type="SUPFAM" id="SSF47473">
    <property type="entry name" value="EF-hand"/>
    <property type="match status" value="2"/>
</dbReference>
<dbReference type="PROSITE" id="PS50222">
    <property type="entry name" value="EF_HAND_2"/>
    <property type="match status" value="4"/>
</dbReference>
<gene>
    <name type="primary">Micu2</name>
    <name type="synonym">Efha1</name>
    <name type="synonym">Smhs2</name>
    <name type="ORF">09C01</name>
</gene>
<keyword id="KW-0106">Calcium</keyword>
<keyword id="KW-1015">Disulfide bond</keyword>
<keyword id="KW-0472">Membrane</keyword>
<keyword id="KW-0479">Metal-binding</keyword>
<keyword id="KW-0496">Mitochondrion</keyword>
<keyword id="KW-0999">Mitochondrion inner membrane</keyword>
<keyword id="KW-0597">Phosphoprotein</keyword>
<keyword id="KW-1185">Reference proteome</keyword>
<keyword id="KW-0677">Repeat</keyword>
<keyword id="KW-0809">Transit peptide</keyword>
<organism>
    <name type="scientific">Rattus norvegicus</name>
    <name type="common">Rat</name>
    <dbReference type="NCBI Taxonomy" id="10116"/>
    <lineage>
        <taxon>Eukaryota</taxon>
        <taxon>Metazoa</taxon>
        <taxon>Chordata</taxon>
        <taxon>Craniata</taxon>
        <taxon>Vertebrata</taxon>
        <taxon>Euteleostomi</taxon>
        <taxon>Mammalia</taxon>
        <taxon>Eutheria</taxon>
        <taxon>Euarchontoglires</taxon>
        <taxon>Glires</taxon>
        <taxon>Rodentia</taxon>
        <taxon>Myomorpha</taxon>
        <taxon>Muroidea</taxon>
        <taxon>Muridae</taxon>
        <taxon>Murinae</taxon>
        <taxon>Rattus</taxon>
    </lineage>
</organism>
<evidence type="ECO:0000250" key="1">
    <source>
        <dbReference type="UniProtKB" id="Q8CD10"/>
    </source>
</evidence>
<evidence type="ECO:0000250" key="2">
    <source>
        <dbReference type="UniProtKB" id="Q8IYU8"/>
    </source>
</evidence>
<evidence type="ECO:0000255" key="3"/>
<evidence type="ECO:0000255" key="4">
    <source>
        <dbReference type="PROSITE-ProRule" id="PRU00448"/>
    </source>
</evidence>
<evidence type="ECO:0000305" key="5"/>
<reference key="1">
    <citation type="journal article" date="2001" name="J. Cell. Biochem.">
        <title>Analysis of altered gene expression in rat soleus muscle atrophied by disuse.</title>
        <authorList>
            <person name="Cros N."/>
            <person name="Tkatchenko A.V."/>
            <person name="Pisani D.F."/>
            <person name="Leclerc L."/>
            <person name="Leger J.J."/>
            <person name="Marini J.-F."/>
            <person name="Dechesne C.A."/>
        </authorList>
    </citation>
    <scope>NUCLEOTIDE SEQUENCE [MRNA]</scope>
    <source>
        <strain>Sprague-Dawley</strain>
        <tissue>Skeletal muscle</tissue>
    </source>
</reference>
<feature type="transit peptide" description="Mitochondrion" evidence="3">
    <location>
        <begin position="1"/>
        <end position="22"/>
    </location>
</feature>
<feature type="chain" id="PRO_0000251219" description="Calcium uptake protein 2, mitochondrial">
    <location>
        <begin position="23"/>
        <end position="432"/>
    </location>
</feature>
<feature type="domain" description="EF-hand 1" evidence="4">
    <location>
        <begin position="169"/>
        <end position="204"/>
    </location>
</feature>
<feature type="domain" description="EF-hand 2; degenerate" evidence="4">
    <location>
        <begin position="224"/>
        <end position="259"/>
    </location>
</feature>
<feature type="domain" description="EF-hand 3; degenerate" evidence="4">
    <location>
        <begin position="290"/>
        <end position="325"/>
    </location>
</feature>
<feature type="domain" description="EF-hand 4" evidence="4">
    <location>
        <begin position="359"/>
        <end position="394"/>
    </location>
</feature>
<feature type="binding site" evidence="2">
    <location>
        <position position="182"/>
    </location>
    <ligand>
        <name>Ca(2+)</name>
        <dbReference type="ChEBI" id="CHEBI:29108"/>
        <label>1</label>
    </ligand>
</feature>
<feature type="binding site" evidence="2">
    <location>
        <position position="184"/>
    </location>
    <ligand>
        <name>Ca(2+)</name>
        <dbReference type="ChEBI" id="CHEBI:29108"/>
        <label>1</label>
    </ligand>
</feature>
<feature type="binding site" evidence="2">
    <location>
        <position position="186"/>
    </location>
    <ligand>
        <name>Ca(2+)</name>
        <dbReference type="ChEBI" id="CHEBI:29108"/>
        <label>1</label>
    </ligand>
</feature>
<feature type="binding site" evidence="2">
    <location>
        <position position="188"/>
    </location>
    <ligand>
        <name>Ca(2+)</name>
        <dbReference type="ChEBI" id="CHEBI:29108"/>
        <label>1</label>
    </ligand>
</feature>
<feature type="binding site" evidence="2">
    <location>
        <position position="190"/>
    </location>
    <ligand>
        <name>Ca(2+)</name>
        <dbReference type="ChEBI" id="CHEBI:29108"/>
        <label>1</label>
    </ligand>
</feature>
<feature type="binding site" evidence="2">
    <location>
        <position position="193"/>
    </location>
    <ligand>
        <name>Ca(2+)</name>
        <dbReference type="ChEBI" id="CHEBI:29108"/>
        <label>1</label>
    </ligand>
</feature>
<feature type="binding site" evidence="2">
    <location>
        <position position="372"/>
    </location>
    <ligand>
        <name>Ca(2+)</name>
        <dbReference type="ChEBI" id="CHEBI:29108"/>
        <label>2</label>
    </ligand>
</feature>
<feature type="binding site" evidence="2">
    <location>
        <position position="374"/>
    </location>
    <ligand>
        <name>Ca(2+)</name>
        <dbReference type="ChEBI" id="CHEBI:29108"/>
        <label>2</label>
    </ligand>
</feature>
<feature type="binding site" evidence="2">
    <location>
        <position position="376"/>
    </location>
    <ligand>
        <name>Ca(2+)</name>
        <dbReference type="ChEBI" id="CHEBI:29108"/>
        <label>2</label>
    </ligand>
</feature>
<feature type="binding site" evidence="2">
    <location>
        <position position="378"/>
    </location>
    <ligand>
        <name>Ca(2+)</name>
        <dbReference type="ChEBI" id="CHEBI:29108"/>
        <label>2</label>
    </ligand>
</feature>
<feature type="binding site" evidence="2">
    <location>
        <position position="383"/>
    </location>
    <ligand>
        <name>Ca(2+)</name>
        <dbReference type="ChEBI" id="CHEBI:29108"/>
        <label>2</label>
    </ligand>
</feature>
<feature type="modified residue" description="Phosphoserine" evidence="2">
    <location>
        <position position="202"/>
    </location>
</feature>
<feature type="disulfide bond" description="Interchain (with C-465 in MICU1)" evidence="1">
    <location>
        <position position="410"/>
    </location>
</feature>
<name>MICU2_RAT</name>
<sequence>MAAAAGRSAWLAAWGGRLRRGLAAGRRAVPTRGPLAAAVAGVALAGAGAAWHHGRVKAAAREGSRTVSAQKNYLGPIEKLSLRKQRFMQFSSLEHDGEYYMTPRDFLFSVMFEQVERKTLVKKLAKKDIEDVLSGIQTARCGSTFFRDLGDKGVISYTEYLFLLTILTKPHSGFHVAFKMLDVDGNEMIERKEFVRLQKIISKQDGFKTVKTNETEYQDPTVKEPGVNTTLQVRFFGKRGEKKLHYKEFRRFVENLQTEVQEMEFLQFSKGLNFMRKEDFAEWLLFFTNTENKDIYWRNVREKLSVGESISLDEFKSFCHFTTHLEDFAIAMQTFSLAHRPVRLAEFKRAVKVATGQELSDNLLDTVFKIFDLDGDECLSHGEFLGVLKNRMHRGLWVSQQQSVQEYWKCVKKESIKGVKEAWRQQAGKGPF</sequence>
<accession>Q99P63</accession>
<proteinExistence type="evidence at transcript level"/>